<accession>Q9MBB3</accession>
<dbReference type="EMBL" id="AB029635">
    <property type="protein sequence ID" value="BAA89498.1"/>
    <property type="molecule type" value="mRNA"/>
</dbReference>
<dbReference type="SMR" id="Q9MBB3"/>
<dbReference type="OMA" id="NDEEHAY"/>
<dbReference type="GO" id="GO:0022627">
    <property type="term" value="C:cytosolic small ribosomal subunit"/>
    <property type="evidence" value="ECO:0007669"/>
    <property type="project" value="UniProtKB-UniRule"/>
</dbReference>
<dbReference type="GO" id="GO:0003735">
    <property type="term" value="F:structural constituent of ribosome"/>
    <property type="evidence" value="ECO:0007669"/>
    <property type="project" value="UniProtKB-UniRule"/>
</dbReference>
<dbReference type="GO" id="GO:0006412">
    <property type="term" value="P:translation"/>
    <property type="evidence" value="ECO:0007669"/>
    <property type="project" value="UniProtKB-UniRule"/>
</dbReference>
<dbReference type="HAMAP" id="MF_03122">
    <property type="entry name" value="Ribosomal_eS1_euk"/>
    <property type="match status" value="1"/>
</dbReference>
<dbReference type="InterPro" id="IPR001593">
    <property type="entry name" value="Ribosomal_eS1"/>
</dbReference>
<dbReference type="InterPro" id="IPR018281">
    <property type="entry name" value="Ribosomal_eS1_CS"/>
</dbReference>
<dbReference type="InterPro" id="IPR027500">
    <property type="entry name" value="Ribosomal_eS1_euk"/>
</dbReference>
<dbReference type="PANTHER" id="PTHR11830">
    <property type="entry name" value="40S RIBOSOMAL PROTEIN S3A"/>
    <property type="match status" value="1"/>
</dbReference>
<dbReference type="Pfam" id="PF01015">
    <property type="entry name" value="Ribosomal_S3Ae"/>
    <property type="match status" value="1"/>
</dbReference>
<dbReference type="SMART" id="SM01397">
    <property type="entry name" value="Ribosomal_S3Ae"/>
    <property type="match status" value="1"/>
</dbReference>
<dbReference type="PROSITE" id="PS01191">
    <property type="entry name" value="RIBOSOMAL_S3AE"/>
    <property type="match status" value="1"/>
</dbReference>
<gene>
    <name type="primary">cyc07</name>
</gene>
<comment type="subunit">
    <text evidence="1">Component of the small ribosomal subunit. Mature ribosomes consist of a small (40S) and a large (60S) subunit. The 40S subunit contains about 33 different proteins and 1 molecule of RNA (18S). The 60S subunit contains about 49 different proteins and 3 molecules of RNA (25S, 5.8S and 5S).</text>
</comment>
<comment type="subcellular location">
    <subcellularLocation>
        <location evidence="1">Cytoplasm</location>
    </subcellularLocation>
</comment>
<comment type="similarity">
    <text evidence="1">Belongs to the eukaryotic ribosomal protein eS1 family.</text>
</comment>
<name>RS3A_DAUCA</name>
<feature type="initiator methionine" description="Removed" evidence="1">
    <location>
        <position position="1"/>
    </location>
</feature>
<feature type="chain" id="PRO_0000389329" description="Small ribosomal subunit protein eS1">
    <location>
        <begin position="2"/>
        <end position="261"/>
    </location>
</feature>
<feature type="region of interest" description="Disordered" evidence="2">
    <location>
        <begin position="1"/>
        <end position="21"/>
    </location>
</feature>
<feature type="compositionally biased region" description="Basic residues" evidence="2">
    <location>
        <begin position="1"/>
        <end position="18"/>
    </location>
</feature>
<reference key="1">
    <citation type="submission" date="1999-07" db="EMBL/GenBank/DDBJ databases">
        <title>Involvement of CHB1, a carrot HD-Zip homeobox gene, in body plan of somatic embryos.</title>
        <authorList>
            <person name="Tokuji Y."/>
            <person name="Hiwatashi Y."/>
            <person name="Demura T."/>
            <person name="Sato K."/>
            <person name="Ito M."/>
            <person name="Kawahara R."/>
            <person name="Fukuda H."/>
        </authorList>
    </citation>
    <scope>NUCLEOTIDE SEQUENCE [MRNA]</scope>
</reference>
<proteinExistence type="evidence at transcript level"/>
<sequence length="261" mass="29771">MAVGKNKRISKGKKGGKKKATDPFAKKDWYDIKAPNVFQNKNVGKTLVSRTQGTKIASEGLKHRVFEVCLADLQGDEDQAYRKIRLRAEDVQGKNVLTNFYGMDFTTDKLRSLVRKWQTLIEAHVDVKTTDSYTLRMFCIGFTKKRANQQKRTCYAQSSQIRQIRRKMVEIMRNQASSCDLKELVAKFIPESIGREIEKATSSIFPLQNVFIRKVKILKAPKFDIGKLMEVHGDYSEDVGVKLERPIEETMVEGETEVVGA</sequence>
<organism>
    <name type="scientific">Daucus carota</name>
    <name type="common">Wild carrot</name>
    <dbReference type="NCBI Taxonomy" id="4039"/>
    <lineage>
        <taxon>Eukaryota</taxon>
        <taxon>Viridiplantae</taxon>
        <taxon>Streptophyta</taxon>
        <taxon>Embryophyta</taxon>
        <taxon>Tracheophyta</taxon>
        <taxon>Spermatophyta</taxon>
        <taxon>Magnoliopsida</taxon>
        <taxon>eudicotyledons</taxon>
        <taxon>Gunneridae</taxon>
        <taxon>Pentapetalae</taxon>
        <taxon>asterids</taxon>
        <taxon>campanulids</taxon>
        <taxon>Apiales</taxon>
        <taxon>Apiaceae</taxon>
        <taxon>Apioideae</taxon>
        <taxon>Scandiceae</taxon>
        <taxon>Daucinae</taxon>
        <taxon>Daucus</taxon>
        <taxon>Daucus sect. Daucus</taxon>
    </lineage>
</organism>
<keyword id="KW-0963">Cytoplasm</keyword>
<keyword id="KW-0687">Ribonucleoprotein</keyword>
<keyword id="KW-0689">Ribosomal protein</keyword>
<evidence type="ECO:0000255" key="1">
    <source>
        <dbReference type="HAMAP-Rule" id="MF_03122"/>
    </source>
</evidence>
<evidence type="ECO:0000256" key="2">
    <source>
        <dbReference type="SAM" id="MobiDB-lite"/>
    </source>
</evidence>
<evidence type="ECO:0000305" key="3"/>
<protein>
    <recommendedName>
        <fullName evidence="1">Small ribosomal subunit protein eS1</fullName>
    </recommendedName>
    <alternativeName>
        <fullName evidence="3">40S ribosomal protein S3a</fullName>
    </alternativeName>
    <alternativeName>
        <fullName>Protein cyc07</fullName>
    </alternativeName>
</protein>